<name>ACKA_RHIML</name>
<protein>
    <recommendedName>
        <fullName evidence="1">Acetate kinase</fullName>
        <ecNumber evidence="1">2.7.2.1</ecNumber>
    </recommendedName>
    <alternativeName>
        <fullName evidence="1">Acetokinase</fullName>
    </alternativeName>
</protein>
<dbReference type="EC" id="2.7.2.1" evidence="1"/>
<dbReference type="EMBL" id="AF095903">
    <property type="protein sequence ID" value="AAD24358.1"/>
    <property type="molecule type" value="Genomic_DNA"/>
</dbReference>
<dbReference type="EMBL" id="AF074452">
    <property type="protein sequence ID" value="AAD42996.1"/>
    <property type="molecule type" value="Genomic_DNA"/>
</dbReference>
<dbReference type="SMR" id="Q9X449"/>
<dbReference type="UniPathway" id="UPA00340">
    <property type="reaction ID" value="UER00458"/>
</dbReference>
<dbReference type="GO" id="GO:0005829">
    <property type="term" value="C:cytosol"/>
    <property type="evidence" value="ECO:0007669"/>
    <property type="project" value="TreeGrafter"/>
</dbReference>
<dbReference type="GO" id="GO:0008776">
    <property type="term" value="F:acetate kinase activity"/>
    <property type="evidence" value="ECO:0007669"/>
    <property type="project" value="UniProtKB-UniRule"/>
</dbReference>
<dbReference type="GO" id="GO:0005524">
    <property type="term" value="F:ATP binding"/>
    <property type="evidence" value="ECO:0007669"/>
    <property type="project" value="UniProtKB-KW"/>
</dbReference>
<dbReference type="GO" id="GO:0000287">
    <property type="term" value="F:magnesium ion binding"/>
    <property type="evidence" value="ECO:0007669"/>
    <property type="project" value="UniProtKB-UniRule"/>
</dbReference>
<dbReference type="GO" id="GO:0006083">
    <property type="term" value="P:acetate metabolic process"/>
    <property type="evidence" value="ECO:0007669"/>
    <property type="project" value="TreeGrafter"/>
</dbReference>
<dbReference type="GO" id="GO:0006085">
    <property type="term" value="P:acetyl-CoA biosynthetic process"/>
    <property type="evidence" value="ECO:0007669"/>
    <property type="project" value="UniProtKB-UniRule"/>
</dbReference>
<dbReference type="CDD" id="cd24010">
    <property type="entry name" value="ASKHA_NBD_AcK_PK"/>
    <property type="match status" value="1"/>
</dbReference>
<dbReference type="Gene3D" id="3.30.420.40">
    <property type="match status" value="2"/>
</dbReference>
<dbReference type="HAMAP" id="MF_00020">
    <property type="entry name" value="Acetate_kinase"/>
    <property type="match status" value="1"/>
</dbReference>
<dbReference type="InterPro" id="IPR004372">
    <property type="entry name" value="Ac/propionate_kinase"/>
</dbReference>
<dbReference type="InterPro" id="IPR000890">
    <property type="entry name" value="Aliphatic_acid_kin_short-chain"/>
</dbReference>
<dbReference type="InterPro" id="IPR023865">
    <property type="entry name" value="Aliphatic_acid_kinase_CS"/>
</dbReference>
<dbReference type="InterPro" id="IPR043129">
    <property type="entry name" value="ATPase_NBD"/>
</dbReference>
<dbReference type="NCBIfam" id="TIGR00016">
    <property type="entry name" value="ackA"/>
    <property type="match status" value="1"/>
</dbReference>
<dbReference type="PANTHER" id="PTHR21060">
    <property type="entry name" value="ACETATE KINASE"/>
    <property type="match status" value="1"/>
</dbReference>
<dbReference type="PANTHER" id="PTHR21060:SF21">
    <property type="entry name" value="ACETATE KINASE"/>
    <property type="match status" value="1"/>
</dbReference>
<dbReference type="Pfam" id="PF00871">
    <property type="entry name" value="Acetate_kinase"/>
    <property type="match status" value="1"/>
</dbReference>
<dbReference type="PIRSF" id="PIRSF000722">
    <property type="entry name" value="Acetate_prop_kin"/>
    <property type="match status" value="1"/>
</dbReference>
<dbReference type="PRINTS" id="PR00471">
    <property type="entry name" value="ACETATEKNASE"/>
</dbReference>
<dbReference type="SUPFAM" id="SSF53067">
    <property type="entry name" value="Actin-like ATPase domain"/>
    <property type="match status" value="2"/>
</dbReference>
<dbReference type="PROSITE" id="PS01075">
    <property type="entry name" value="ACETATE_KINASE_1"/>
    <property type="match status" value="1"/>
</dbReference>
<organism>
    <name type="scientific">Rhizobium meliloti</name>
    <name type="common">Ensifer meliloti</name>
    <name type="synonym">Sinorhizobium meliloti</name>
    <dbReference type="NCBI Taxonomy" id="382"/>
    <lineage>
        <taxon>Bacteria</taxon>
        <taxon>Pseudomonadati</taxon>
        <taxon>Pseudomonadota</taxon>
        <taxon>Alphaproteobacteria</taxon>
        <taxon>Hyphomicrobiales</taxon>
        <taxon>Rhizobiaceae</taxon>
        <taxon>Sinorhizobium/Ensifer group</taxon>
        <taxon>Sinorhizobium</taxon>
    </lineage>
</organism>
<gene>
    <name evidence="1" type="primary">ackA</name>
</gene>
<evidence type="ECO:0000255" key="1">
    <source>
        <dbReference type="HAMAP-Rule" id="MF_00020"/>
    </source>
</evidence>
<evidence type="ECO:0000305" key="2"/>
<feature type="chain" id="PRO_0000107604" description="Acetate kinase">
    <location>
        <begin position="1"/>
        <end position="393"/>
    </location>
</feature>
<feature type="active site" description="Proton donor/acceptor" evidence="1">
    <location>
        <position position="148"/>
    </location>
</feature>
<feature type="binding site" evidence="1">
    <location>
        <position position="8"/>
    </location>
    <ligand>
        <name>Mg(2+)</name>
        <dbReference type="ChEBI" id="CHEBI:18420"/>
    </ligand>
</feature>
<feature type="binding site" evidence="1">
    <location>
        <position position="15"/>
    </location>
    <ligand>
        <name>ATP</name>
        <dbReference type="ChEBI" id="CHEBI:30616"/>
    </ligand>
</feature>
<feature type="binding site" evidence="1">
    <location>
        <position position="91"/>
    </location>
    <ligand>
        <name>substrate</name>
    </ligand>
</feature>
<feature type="binding site" evidence="1">
    <location>
        <begin position="206"/>
        <end position="210"/>
    </location>
    <ligand>
        <name>ATP</name>
        <dbReference type="ChEBI" id="CHEBI:30616"/>
    </ligand>
</feature>
<feature type="binding site" evidence="1">
    <location>
        <begin position="280"/>
        <end position="282"/>
    </location>
    <ligand>
        <name>ATP</name>
        <dbReference type="ChEBI" id="CHEBI:30616"/>
    </ligand>
</feature>
<feature type="binding site" evidence="1">
    <location>
        <begin position="325"/>
        <end position="329"/>
    </location>
    <ligand>
        <name>ATP</name>
        <dbReference type="ChEBI" id="CHEBI:30616"/>
    </ligand>
</feature>
<feature type="binding site" evidence="1">
    <location>
        <position position="376"/>
    </location>
    <ligand>
        <name>Mg(2+)</name>
        <dbReference type="ChEBI" id="CHEBI:18420"/>
    </ligand>
</feature>
<feature type="site" description="Transition state stabilizer" evidence="1">
    <location>
        <position position="179"/>
    </location>
</feature>
<feature type="sequence conflict" description="In Ref. 2; AAD42996." evidence="2" ref="2">
    <original>SGAS</original>
    <variation>AEFR</variation>
    <location>
        <begin position="209"/>
        <end position="212"/>
    </location>
</feature>
<feature type="sequence conflict" description="In Ref. 2." evidence="2" ref="2">
    <original>LHRPSTGCRWDT</original>
    <variation>GFTALDGLPMGTR</variation>
    <location>
        <begin position="227"/>
        <end position="238"/>
    </location>
</feature>
<comment type="function">
    <text evidence="1">Catalyzes the formation of acetyl phosphate from acetate and ATP. Can also catalyze the reverse reaction.</text>
</comment>
<comment type="catalytic activity">
    <reaction evidence="1">
        <text>acetate + ATP = acetyl phosphate + ADP</text>
        <dbReference type="Rhea" id="RHEA:11352"/>
        <dbReference type="ChEBI" id="CHEBI:22191"/>
        <dbReference type="ChEBI" id="CHEBI:30089"/>
        <dbReference type="ChEBI" id="CHEBI:30616"/>
        <dbReference type="ChEBI" id="CHEBI:456216"/>
        <dbReference type="EC" id="2.7.2.1"/>
    </reaction>
</comment>
<comment type="cofactor">
    <cofactor evidence="1">
        <name>Mg(2+)</name>
        <dbReference type="ChEBI" id="CHEBI:18420"/>
    </cofactor>
    <cofactor evidence="1">
        <name>Mn(2+)</name>
        <dbReference type="ChEBI" id="CHEBI:29035"/>
    </cofactor>
    <text evidence="1">Mg(2+). Can also accept Mn(2+).</text>
</comment>
<comment type="pathway">
    <text evidence="1">Metabolic intermediate biosynthesis; acetyl-CoA biosynthesis; acetyl-CoA from acetate: step 1/2.</text>
</comment>
<comment type="subunit">
    <text evidence="1">Homodimer.</text>
</comment>
<comment type="subcellular location">
    <subcellularLocation>
        <location evidence="1">Cytoplasm</location>
    </subcellularLocation>
</comment>
<comment type="similarity">
    <text evidence="1">Belongs to the acetokinase family.</text>
</comment>
<keyword id="KW-0067">ATP-binding</keyword>
<keyword id="KW-0963">Cytoplasm</keyword>
<keyword id="KW-0418">Kinase</keyword>
<keyword id="KW-0460">Magnesium</keyword>
<keyword id="KW-0479">Metal-binding</keyword>
<keyword id="KW-0547">Nucleotide-binding</keyword>
<keyword id="KW-0808">Transferase</keyword>
<sequence length="393" mass="42135">MDALLVVNAGSSSLKFQVFGIVGMDLTRQIRGKVDGIGTRPRLQATAADGTQLIDQTYDAKAVRDLPAAITEARRWLLTLEGFELQAVGHRVVHGGPDYTRPVLIDATVLDHLAGYQDLAPLHQPNNLAPIRLAMEINPDVPQVACFDTAFHRGHAKHTDCYALPRSFYDEGVRRYGFHGLSYEYIAERLREVASRAAKGRVVVAHLGSGASMCGLRDGRSIESTMLHRPSTGCRWDTPGQLDPGVVLYLILQKGMKAQAVSDLLYHDAGLKGLSGLSNDMRDLLASDDPHAALSVAHFVYRCVLNGGMLAAALGGIDAFVFTAGVGENSPPIRARIVEGLAWLGAELDPAANEAGAALISTATSRVAVHVLPTDEELMIARHTLALISAPNA</sequence>
<reference key="1">
    <citation type="journal article" date="1999" name="J. Bacteriol.">
        <title>Genes coding for phosphotransacetylase and acetate kinase in Sinorhizobium meliloti are in an operon that is inducible by phosphate stress and controlled by phoB.</title>
        <authorList>
            <person name="Summers M.L."/>
            <person name="Denton M.C."/>
            <person name="McDermott T.R."/>
        </authorList>
    </citation>
    <scope>NUCLEOTIDE SEQUENCE [GENOMIC DNA]</scope>
    <source>
        <strain>104A14</strain>
    </source>
</reference>
<reference key="2">
    <citation type="journal article" date="1998" name="Mol. Plant Microbe Interact.">
        <title>Expression and regulation of phosphate stress inducible genes in Sinorhizobium meliloti.</title>
        <authorList>
            <person name="Summers M.L."/>
            <person name="Elkins J.G."/>
            <person name="Elliott B.A."/>
            <person name="McDermott T.R."/>
        </authorList>
    </citation>
    <scope>NUCLEOTIDE SEQUENCE [GENOMIC DNA] OF 207-314</scope>
    <source>
        <strain>104A14</strain>
    </source>
</reference>
<accession>Q9X449</accession>
<accession>Q9XDG2</accession>
<proteinExistence type="inferred from homology"/>